<gene>
    <name evidence="1" type="primary">gatB</name>
    <name type="ordered locus">BPP4059</name>
</gene>
<evidence type="ECO:0000255" key="1">
    <source>
        <dbReference type="HAMAP-Rule" id="MF_00121"/>
    </source>
</evidence>
<accession>Q7W3H6</accession>
<keyword id="KW-0067">ATP-binding</keyword>
<keyword id="KW-0436">Ligase</keyword>
<keyword id="KW-0547">Nucleotide-binding</keyword>
<keyword id="KW-0648">Protein biosynthesis</keyword>
<comment type="function">
    <text evidence="1">Allows the formation of correctly charged Asn-tRNA(Asn) or Gln-tRNA(Gln) through the transamidation of misacylated Asp-tRNA(Asn) or Glu-tRNA(Gln) in organisms which lack either or both of asparaginyl-tRNA or glutaminyl-tRNA synthetases. The reaction takes place in the presence of glutamine and ATP through an activated phospho-Asp-tRNA(Asn) or phospho-Glu-tRNA(Gln).</text>
</comment>
<comment type="catalytic activity">
    <reaction evidence="1">
        <text>L-glutamyl-tRNA(Gln) + L-glutamine + ATP + H2O = L-glutaminyl-tRNA(Gln) + L-glutamate + ADP + phosphate + H(+)</text>
        <dbReference type="Rhea" id="RHEA:17521"/>
        <dbReference type="Rhea" id="RHEA-COMP:9681"/>
        <dbReference type="Rhea" id="RHEA-COMP:9684"/>
        <dbReference type="ChEBI" id="CHEBI:15377"/>
        <dbReference type="ChEBI" id="CHEBI:15378"/>
        <dbReference type="ChEBI" id="CHEBI:29985"/>
        <dbReference type="ChEBI" id="CHEBI:30616"/>
        <dbReference type="ChEBI" id="CHEBI:43474"/>
        <dbReference type="ChEBI" id="CHEBI:58359"/>
        <dbReference type="ChEBI" id="CHEBI:78520"/>
        <dbReference type="ChEBI" id="CHEBI:78521"/>
        <dbReference type="ChEBI" id="CHEBI:456216"/>
    </reaction>
</comment>
<comment type="catalytic activity">
    <reaction evidence="1">
        <text>L-aspartyl-tRNA(Asn) + L-glutamine + ATP + H2O = L-asparaginyl-tRNA(Asn) + L-glutamate + ADP + phosphate + 2 H(+)</text>
        <dbReference type="Rhea" id="RHEA:14513"/>
        <dbReference type="Rhea" id="RHEA-COMP:9674"/>
        <dbReference type="Rhea" id="RHEA-COMP:9677"/>
        <dbReference type="ChEBI" id="CHEBI:15377"/>
        <dbReference type="ChEBI" id="CHEBI:15378"/>
        <dbReference type="ChEBI" id="CHEBI:29985"/>
        <dbReference type="ChEBI" id="CHEBI:30616"/>
        <dbReference type="ChEBI" id="CHEBI:43474"/>
        <dbReference type="ChEBI" id="CHEBI:58359"/>
        <dbReference type="ChEBI" id="CHEBI:78515"/>
        <dbReference type="ChEBI" id="CHEBI:78516"/>
        <dbReference type="ChEBI" id="CHEBI:456216"/>
    </reaction>
</comment>
<comment type="subunit">
    <text evidence="1">Heterotrimer of A, B and C subunits.</text>
</comment>
<comment type="similarity">
    <text evidence="1">Belongs to the GatB/GatE family. GatB subfamily.</text>
</comment>
<proteinExistence type="inferred from homology"/>
<reference key="1">
    <citation type="journal article" date="2003" name="Nat. Genet.">
        <title>Comparative analysis of the genome sequences of Bordetella pertussis, Bordetella parapertussis and Bordetella bronchiseptica.</title>
        <authorList>
            <person name="Parkhill J."/>
            <person name="Sebaihia M."/>
            <person name="Preston A."/>
            <person name="Murphy L.D."/>
            <person name="Thomson N.R."/>
            <person name="Harris D.E."/>
            <person name="Holden M.T.G."/>
            <person name="Churcher C.M."/>
            <person name="Bentley S.D."/>
            <person name="Mungall K.L."/>
            <person name="Cerdeno-Tarraga A.-M."/>
            <person name="Temple L."/>
            <person name="James K.D."/>
            <person name="Harris B."/>
            <person name="Quail M.A."/>
            <person name="Achtman M."/>
            <person name="Atkin R."/>
            <person name="Baker S."/>
            <person name="Basham D."/>
            <person name="Bason N."/>
            <person name="Cherevach I."/>
            <person name="Chillingworth T."/>
            <person name="Collins M."/>
            <person name="Cronin A."/>
            <person name="Davis P."/>
            <person name="Doggett J."/>
            <person name="Feltwell T."/>
            <person name="Goble A."/>
            <person name="Hamlin N."/>
            <person name="Hauser H."/>
            <person name="Holroyd S."/>
            <person name="Jagels K."/>
            <person name="Leather S."/>
            <person name="Moule S."/>
            <person name="Norberczak H."/>
            <person name="O'Neil S."/>
            <person name="Ormond D."/>
            <person name="Price C."/>
            <person name="Rabbinowitsch E."/>
            <person name="Rutter S."/>
            <person name="Sanders M."/>
            <person name="Saunders D."/>
            <person name="Seeger K."/>
            <person name="Sharp S."/>
            <person name="Simmonds M."/>
            <person name="Skelton J."/>
            <person name="Squares R."/>
            <person name="Squares S."/>
            <person name="Stevens K."/>
            <person name="Unwin L."/>
            <person name="Whitehead S."/>
            <person name="Barrell B.G."/>
            <person name="Maskell D.J."/>
        </authorList>
    </citation>
    <scope>NUCLEOTIDE SEQUENCE [LARGE SCALE GENOMIC DNA]</scope>
    <source>
        <strain>12822 / ATCC BAA-587 / NCTC 13253</strain>
    </source>
</reference>
<protein>
    <recommendedName>
        <fullName evidence="1">Aspartyl/glutamyl-tRNA(Asn/Gln) amidotransferase subunit B</fullName>
        <shortName evidence="1">Asp/Glu-ADT subunit B</shortName>
        <ecNumber evidence="1">6.3.5.-</ecNumber>
    </recommendedName>
</protein>
<organism>
    <name type="scientific">Bordetella parapertussis (strain 12822 / ATCC BAA-587 / NCTC 13253)</name>
    <dbReference type="NCBI Taxonomy" id="257311"/>
    <lineage>
        <taxon>Bacteria</taxon>
        <taxon>Pseudomonadati</taxon>
        <taxon>Pseudomonadota</taxon>
        <taxon>Betaproteobacteria</taxon>
        <taxon>Burkholderiales</taxon>
        <taxon>Alcaligenaceae</taxon>
        <taxon>Bordetella</taxon>
    </lineage>
</organism>
<name>GATB_BORPA</name>
<sequence length="484" mass="52320">MNWEIVIGLETHTQLSTDSKIFSGSSTRFGAAPNTQANAVDLALPGSLPVMNRGAAERAILFGLAVGGKVAPRSVFARKNYFYPDLPKGYQISQYELPVVEGGTLSFFVGEEEKTVNLTRAHLEEDAGKSLHDEFSLASGAPASGIDLNRAGTPLLEIVTEPEMRSAAEAVAYARALHSLVVWLGICDGNMQEGSFRCDANVSVRPVGQKEFGTRTEIKNVNSFRFLERAILFEARRQIELIEDGGTVVQETRLYDADRDETRSMRSKEDAHDYRYFPDPDLPPLVIGQDWVDAVRAGMPELPTAQRARFEADYGLPAYDAAQLTVSRAMADYFEAVARALPAGQAKLAANWIMGEVAATLNREEKDIDAAPVSAAALATLINRIIDGTISNKIARDVFAAMWAGENGGDADAIIAARGLKQISDSGAIGAMIDEVLAANPAIVEEYRAGKQKAFNSLVGQIMKAAKGKANPQQVNELLKEKLG</sequence>
<dbReference type="EC" id="6.3.5.-" evidence="1"/>
<dbReference type="EMBL" id="BX640435">
    <property type="protein sequence ID" value="CAE39342.1"/>
    <property type="molecule type" value="Genomic_DNA"/>
</dbReference>
<dbReference type="RefSeq" id="WP_010929368.1">
    <property type="nucleotide sequence ID" value="NC_002928.3"/>
</dbReference>
<dbReference type="SMR" id="Q7W3H6"/>
<dbReference type="GeneID" id="93205858"/>
<dbReference type="KEGG" id="bpa:BPP4059"/>
<dbReference type="HOGENOM" id="CLU_019240_0_0_4"/>
<dbReference type="Proteomes" id="UP000001421">
    <property type="component" value="Chromosome"/>
</dbReference>
<dbReference type="GO" id="GO:0050566">
    <property type="term" value="F:asparaginyl-tRNA synthase (glutamine-hydrolyzing) activity"/>
    <property type="evidence" value="ECO:0007669"/>
    <property type="project" value="RHEA"/>
</dbReference>
<dbReference type="GO" id="GO:0005524">
    <property type="term" value="F:ATP binding"/>
    <property type="evidence" value="ECO:0007669"/>
    <property type="project" value="UniProtKB-KW"/>
</dbReference>
<dbReference type="GO" id="GO:0050567">
    <property type="term" value="F:glutaminyl-tRNA synthase (glutamine-hydrolyzing) activity"/>
    <property type="evidence" value="ECO:0007669"/>
    <property type="project" value="UniProtKB-UniRule"/>
</dbReference>
<dbReference type="GO" id="GO:0070681">
    <property type="term" value="P:glutaminyl-tRNAGln biosynthesis via transamidation"/>
    <property type="evidence" value="ECO:0007669"/>
    <property type="project" value="TreeGrafter"/>
</dbReference>
<dbReference type="GO" id="GO:0006412">
    <property type="term" value="P:translation"/>
    <property type="evidence" value="ECO:0007669"/>
    <property type="project" value="UniProtKB-UniRule"/>
</dbReference>
<dbReference type="FunFam" id="1.10.10.410:FF:000001">
    <property type="entry name" value="Aspartyl/glutamyl-tRNA(Asn/Gln) amidotransferase subunit B"/>
    <property type="match status" value="1"/>
</dbReference>
<dbReference type="FunFam" id="1.10.150.380:FF:000001">
    <property type="entry name" value="Aspartyl/glutamyl-tRNA(Asn/Gln) amidotransferase subunit B"/>
    <property type="match status" value="1"/>
</dbReference>
<dbReference type="Gene3D" id="1.10.10.410">
    <property type="match status" value="1"/>
</dbReference>
<dbReference type="Gene3D" id="1.10.150.380">
    <property type="entry name" value="GatB domain, N-terminal subdomain"/>
    <property type="match status" value="1"/>
</dbReference>
<dbReference type="HAMAP" id="MF_00121">
    <property type="entry name" value="GatB"/>
    <property type="match status" value="1"/>
</dbReference>
<dbReference type="InterPro" id="IPR017959">
    <property type="entry name" value="Asn/Gln-tRNA_amidoTrfase_suB/E"/>
</dbReference>
<dbReference type="InterPro" id="IPR006075">
    <property type="entry name" value="Asn/Gln-tRNA_Trfase_suB/E_cat"/>
</dbReference>
<dbReference type="InterPro" id="IPR018027">
    <property type="entry name" value="Asn/Gln_amidotransferase"/>
</dbReference>
<dbReference type="InterPro" id="IPR003789">
    <property type="entry name" value="Asn/Gln_tRNA_amidoTrase-B-like"/>
</dbReference>
<dbReference type="InterPro" id="IPR004413">
    <property type="entry name" value="GatB"/>
</dbReference>
<dbReference type="InterPro" id="IPR042114">
    <property type="entry name" value="GatB_C_1"/>
</dbReference>
<dbReference type="InterPro" id="IPR023168">
    <property type="entry name" value="GatB_Yqey_C_2"/>
</dbReference>
<dbReference type="InterPro" id="IPR017958">
    <property type="entry name" value="Gln-tRNA_amidoTrfase_suB_CS"/>
</dbReference>
<dbReference type="InterPro" id="IPR014746">
    <property type="entry name" value="Gln_synth/guanido_kin_cat_dom"/>
</dbReference>
<dbReference type="NCBIfam" id="TIGR00133">
    <property type="entry name" value="gatB"/>
    <property type="match status" value="1"/>
</dbReference>
<dbReference type="NCBIfam" id="NF004012">
    <property type="entry name" value="PRK05477.1-2"/>
    <property type="match status" value="1"/>
</dbReference>
<dbReference type="NCBIfam" id="NF004014">
    <property type="entry name" value="PRK05477.1-4"/>
    <property type="match status" value="1"/>
</dbReference>
<dbReference type="NCBIfam" id="NF004015">
    <property type="entry name" value="PRK05477.1-5"/>
    <property type="match status" value="1"/>
</dbReference>
<dbReference type="PANTHER" id="PTHR11659">
    <property type="entry name" value="GLUTAMYL-TRNA GLN AMIDOTRANSFERASE SUBUNIT B MITOCHONDRIAL AND PROKARYOTIC PET112-RELATED"/>
    <property type="match status" value="1"/>
</dbReference>
<dbReference type="PANTHER" id="PTHR11659:SF0">
    <property type="entry name" value="GLUTAMYL-TRNA(GLN) AMIDOTRANSFERASE SUBUNIT B, MITOCHONDRIAL"/>
    <property type="match status" value="1"/>
</dbReference>
<dbReference type="Pfam" id="PF02934">
    <property type="entry name" value="GatB_N"/>
    <property type="match status" value="1"/>
</dbReference>
<dbReference type="Pfam" id="PF02637">
    <property type="entry name" value="GatB_Yqey"/>
    <property type="match status" value="1"/>
</dbReference>
<dbReference type="SMART" id="SM00845">
    <property type="entry name" value="GatB_Yqey"/>
    <property type="match status" value="1"/>
</dbReference>
<dbReference type="SUPFAM" id="SSF89095">
    <property type="entry name" value="GatB/YqeY motif"/>
    <property type="match status" value="1"/>
</dbReference>
<dbReference type="SUPFAM" id="SSF55931">
    <property type="entry name" value="Glutamine synthetase/guanido kinase"/>
    <property type="match status" value="1"/>
</dbReference>
<dbReference type="PROSITE" id="PS01234">
    <property type="entry name" value="GATB"/>
    <property type="match status" value="1"/>
</dbReference>
<feature type="chain" id="PRO_0000148767" description="Aspartyl/glutamyl-tRNA(Asn/Gln) amidotransferase subunit B">
    <location>
        <begin position="1"/>
        <end position="484"/>
    </location>
</feature>